<organism>
    <name type="scientific">Saccharum officinarum</name>
    <name type="common">Sugarcane</name>
    <dbReference type="NCBI Taxonomy" id="4547"/>
    <lineage>
        <taxon>Eukaryota</taxon>
        <taxon>Viridiplantae</taxon>
        <taxon>Streptophyta</taxon>
        <taxon>Embryophyta</taxon>
        <taxon>Tracheophyta</taxon>
        <taxon>Spermatophyta</taxon>
        <taxon>Magnoliopsida</taxon>
        <taxon>Liliopsida</taxon>
        <taxon>Poales</taxon>
        <taxon>Poaceae</taxon>
        <taxon>PACMAD clade</taxon>
        <taxon>Panicoideae</taxon>
        <taxon>Andropogonodae</taxon>
        <taxon>Andropogoneae</taxon>
        <taxon>Saccharinae</taxon>
        <taxon>Saccharum</taxon>
        <taxon>Saccharum officinarum species complex</taxon>
    </lineage>
</organism>
<evidence type="ECO:0000255" key="1">
    <source>
        <dbReference type="HAMAP-Rule" id="MF_00382"/>
    </source>
</evidence>
<evidence type="ECO:0000305" key="2"/>
<keyword id="KW-0150">Chloroplast</keyword>
<keyword id="KW-0934">Plastid</keyword>
<keyword id="KW-0687">Ribonucleoprotein</keyword>
<keyword id="KW-0689">Ribosomal protein</keyword>
<keyword id="KW-0694">RNA-binding</keyword>
<keyword id="KW-0699">rRNA-binding</keyword>
<geneLocation type="chloroplast"/>
<reference key="1">
    <citation type="journal article" date="2004" name="DNA Res.">
        <title>Complete nucleotide sequence of the sugarcane (Saccharum officinarum) chloroplast genome: a comparative analysis of four monocot chloroplast genomes.</title>
        <authorList>
            <person name="Asano T."/>
            <person name="Tsudzuki T."/>
            <person name="Takahashi S."/>
            <person name="Shimada H."/>
            <person name="Kadowaki K."/>
        </authorList>
    </citation>
    <scope>NUCLEOTIDE SEQUENCE [LARGE SCALE GENOMIC DNA]</scope>
</reference>
<feature type="chain" id="PRO_0000177310" description="Large ribosomal subunit protein bL20c">
    <location>
        <begin position="1"/>
        <end position="119"/>
    </location>
</feature>
<proteinExistence type="inferred from homology"/>
<comment type="function">
    <text evidence="1">Binds directly to 23S ribosomal RNA and is necessary for the in vitro assembly process of the 50S ribosomal subunit. It is not involved in the protein synthesizing functions of that subunit.</text>
</comment>
<comment type="subcellular location">
    <subcellularLocation>
        <location>Plastid</location>
        <location>Chloroplast</location>
    </subcellularLocation>
</comment>
<comment type="similarity">
    <text evidence="1">Belongs to the bacterial ribosomal protein bL20 family.</text>
</comment>
<protein>
    <recommendedName>
        <fullName evidence="1">Large ribosomal subunit protein bL20c</fullName>
    </recommendedName>
    <alternativeName>
        <fullName evidence="2">50S ribosomal protein L20, chloroplastic</fullName>
    </alternativeName>
</protein>
<name>RK20_SACOF</name>
<gene>
    <name evidence="1" type="primary">rpl20</name>
</gene>
<sequence length="119" mass="14260">MTRVPRGYIARRRRTKMRSFASNFRGAHLRLNRMITQQVRRAFVSSHRDRGRQKRDFRRLWITRINAATRVYNVFNSYSKLIHNLSKKELILNRKMLAQVAVSNPNNLYTISNKIRTIN</sequence>
<dbReference type="EMBL" id="AP006714">
    <property type="protein sequence ID" value="BAD27315.1"/>
    <property type="molecule type" value="Genomic_DNA"/>
</dbReference>
<dbReference type="RefSeq" id="YP_009389593.1">
    <property type="nucleotide sequence ID" value="NC_035224.1"/>
</dbReference>
<dbReference type="SMR" id="Q6ENU1"/>
<dbReference type="GeneID" id="33347848"/>
<dbReference type="GO" id="GO:0009507">
    <property type="term" value="C:chloroplast"/>
    <property type="evidence" value="ECO:0007669"/>
    <property type="project" value="UniProtKB-SubCell"/>
</dbReference>
<dbReference type="GO" id="GO:1990904">
    <property type="term" value="C:ribonucleoprotein complex"/>
    <property type="evidence" value="ECO:0007669"/>
    <property type="project" value="UniProtKB-KW"/>
</dbReference>
<dbReference type="GO" id="GO:0005840">
    <property type="term" value="C:ribosome"/>
    <property type="evidence" value="ECO:0007669"/>
    <property type="project" value="UniProtKB-KW"/>
</dbReference>
<dbReference type="GO" id="GO:0019843">
    <property type="term" value="F:rRNA binding"/>
    <property type="evidence" value="ECO:0007669"/>
    <property type="project" value="UniProtKB-UniRule"/>
</dbReference>
<dbReference type="GO" id="GO:0003735">
    <property type="term" value="F:structural constituent of ribosome"/>
    <property type="evidence" value="ECO:0007669"/>
    <property type="project" value="InterPro"/>
</dbReference>
<dbReference type="GO" id="GO:0000027">
    <property type="term" value="P:ribosomal large subunit assembly"/>
    <property type="evidence" value="ECO:0007669"/>
    <property type="project" value="UniProtKB-UniRule"/>
</dbReference>
<dbReference type="GO" id="GO:0006412">
    <property type="term" value="P:translation"/>
    <property type="evidence" value="ECO:0007669"/>
    <property type="project" value="InterPro"/>
</dbReference>
<dbReference type="CDD" id="cd07026">
    <property type="entry name" value="Ribosomal_L20"/>
    <property type="match status" value="1"/>
</dbReference>
<dbReference type="FunFam" id="1.10.1900.20:FF:000002">
    <property type="entry name" value="50S ribosomal protein L20, chloroplastic"/>
    <property type="match status" value="1"/>
</dbReference>
<dbReference type="Gene3D" id="6.10.160.10">
    <property type="match status" value="1"/>
</dbReference>
<dbReference type="Gene3D" id="1.10.1900.20">
    <property type="entry name" value="Ribosomal protein L20"/>
    <property type="match status" value="1"/>
</dbReference>
<dbReference type="HAMAP" id="MF_00382">
    <property type="entry name" value="Ribosomal_bL20"/>
    <property type="match status" value="1"/>
</dbReference>
<dbReference type="InterPro" id="IPR005813">
    <property type="entry name" value="Ribosomal_bL20"/>
</dbReference>
<dbReference type="InterPro" id="IPR049946">
    <property type="entry name" value="RIBOSOMAL_L20_CS"/>
</dbReference>
<dbReference type="InterPro" id="IPR035566">
    <property type="entry name" value="Ribosomal_protein_bL20_C"/>
</dbReference>
<dbReference type="NCBIfam" id="TIGR01032">
    <property type="entry name" value="rplT_bact"/>
    <property type="match status" value="1"/>
</dbReference>
<dbReference type="PANTHER" id="PTHR10986">
    <property type="entry name" value="39S RIBOSOMAL PROTEIN L20"/>
    <property type="match status" value="1"/>
</dbReference>
<dbReference type="Pfam" id="PF00453">
    <property type="entry name" value="Ribosomal_L20"/>
    <property type="match status" value="1"/>
</dbReference>
<dbReference type="PRINTS" id="PR00062">
    <property type="entry name" value="RIBOSOMALL20"/>
</dbReference>
<dbReference type="SUPFAM" id="SSF74731">
    <property type="entry name" value="Ribosomal protein L20"/>
    <property type="match status" value="1"/>
</dbReference>
<dbReference type="PROSITE" id="PS00937">
    <property type="entry name" value="RIBOSOMAL_L20"/>
    <property type="match status" value="1"/>
</dbReference>
<accession>Q6ENU1</accession>